<evidence type="ECO:0000255" key="1">
    <source>
        <dbReference type="HAMAP-Rule" id="MF_01013"/>
    </source>
</evidence>
<gene>
    <name evidence="1" type="primary">hisF</name>
    <name type="ordered locus">DIP1558</name>
</gene>
<protein>
    <recommendedName>
        <fullName evidence="1">Imidazole glycerol phosphate synthase subunit HisF</fullName>
        <ecNumber evidence="1">4.3.2.10</ecNumber>
    </recommendedName>
    <alternativeName>
        <fullName evidence="1">IGP synthase cyclase subunit</fullName>
    </alternativeName>
    <alternativeName>
        <fullName evidence="1">IGP synthase subunit HisF</fullName>
    </alternativeName>
    <alternativeName>
        <fullName evidence="1">ImGP synthase subunit HisF</fullName>
        <shortName evidence="1">IGPS subunit HisF</shortName>
    </alternativeName>
</protein>
<name>HIS6_CORDI</name>
<reference key="1">
    <citation type="journal article" date="2003" name="Nucleic Acids Res.">
        <title>The complete genome sequence and analysis of Corynebacterium diphtheriae NCTC13129.</title>
        <authorList>
            <person name="Cerdeno-Tarraga A.-M."/>
            <person name="Efstratiou A."/>
            <person name="Dover L.G."/>
            <person name="Holden M.T.G."/>
            <person name="Pallen M.J."/>
            <person name="Bentley S.D."/>
            <person name="Besra G.S."/>
            <person name="Churcher C.M."/>
            <person name="James K.D."/>
            <person name="De Zoysa A."/>
            <person name="Chillingworth T."/>
            <person name="Cronin A."/>
            <person name="Dowd L."/>
            <person name="Feltwell T."/>
            <person name="Hamlin N."/>
            <person name="Holroyd S."/>
            <person name="Jagels K."/>
            <person name="Moule S."/>
            <person name="Quail M.A."/>
            <person name="Rabbinowitsch E."/>
            <person name="Rutherford K.M."/>
            <person name="Thomson N.R."/>
            <person name="Unwin L."/>
            <person name="Whitehead S."/>
            <person name="Barrell B.G."/>
            <person name="Parkhill J."/>
        </authorList>
    </citation>
    <scope>NUCLEOTIDE SEQUENCE [LARGE SCALE GENOMIC DNA]</scope>
    <source>
        <strain>ATCC 700971 / NCTC 13129 / Biotype gravis</strain>
    </source>
</reference>
<sequence length="258" mass="26990">MPVAVRVIPCLDVKNGRVVKGVNFEGLKDAGDPVELAARYDAEGADELTFLDVSASQDGRGTMLEVVRRTADQVFIPLTVGGGVRSAEDVDQLLRAGADKVSVNTSAIARPELLQELSQRFGAQCVVLSVDARRVPEGGKPQPSGFEVTTHGGTRSAGIDAVEWAQKGEALGVGEILLNSMDGDGTKRGFDLELIEKVRHAVSIPVIASGGAGKPEDFPPAIASGADAVLAASIFHFGEVTISEVKKQVVAAGYEVRS</sequence>
<keyword id="KW-0028">Amino-acid biosynthesis</keyword>
<keyword id="KW-0963">Cytoplasm</keyword>
<keyword id="KW-0368">Histidine biosynthesis</keyword>
<keyword id="KW-0456">Lyase</keyword>
<keyword id="KW-1185">Reference proteome</keyword>
<proteinExistence type="inferred from homology"/>
<organism>
    <name type="scientific">Corynebacterium diphtheriae (strain ATCC 700971 / NCTC 13129 / Biotype gravis)</name>
    <dbReference type="NCBI Taxonomy" id="257309"/>
    <lineage>
        <taxon>Bacteria</taxon>
        <taxon>Bacillati</taxon>
        <taxon>Actinomycetota</taxon>
        <taxon>Actinomycetes</taxon>
        <taxon>Mycobacteriales</taxon>
        <taxon>Corynebacteriaceae</taxon>
        <taxon>Corynebacterium</taxon>
    </lineage>
</organism>
<feature type="chain" id="PRO_0000142146" description="Imidazole glycerol phosphate synthase subunit HisF">
    <location>
        <begin position="1"/>
        <end position="258"/>
    </location>
</feature>
<feature type="active site" evidence="1">
    <location>
        <position position="12"/>
    </location>
</feature>
<feature type="active site" evidence="1">
    <location>
        <position position="131"/>
    </location>
</feature>
<dbReference type="EC" id="4.3.2.10" evidence="1"/>
<dbReference type="EMBL" id="BX248358">
    <property type="protein sequence ID" value="CAE50083.1"/>
    <property type="molecule type" value="Genomic_DNA"/>
</dbReference>
<dbReference type="RefSeq" id="WP_010935152.1">
    <property type="nucleotide sequence ID" value="NC_002935.2"/>
</dbReference>
<dbReference type="SMR" id="P60714"/>
<dbReference type="STRING" id="257309.DIP1558"/>
<dbReference type="KEGG" id="cdi:DIP1558"/>
<dbReference type="HOGENOM" id="CLU_048577_4_0_11"/>
<dbReference type="UniPathway" id="UPA00031">
    <property type="reaction ID" value="UER00010"/>
</dbReference>
<dbReference type="Proteomes" id="UP000002198">
    <property type="component" value="Chromosome"/>
</dbReference>
<dbReference type="GO" id="GO:0005737">
    <property type="term" value="C:cytoplasm"/>
    <property type="evidence" value="ECO:0007669"/>
    <property type="project" value="UniProtKB-SubCell"/>
</dbReference>
<dbReference type="GO" id="GO:0000107">
    <property type="term" value="F:imidazoleglycerol-phosphate synthase activity"/>
    <property type="evidence" value="ECO:0007669"/>
    <property type="project" value="UniProtKB-UniRule"/>
</dbReference>
<dbReference type="GO" id="GO:0016829">
    <property type="term" value="F:lyase activity"/>
    <property type="evidence" value="ECO:0007669"/>
    <property type="project" value="UniProtKB-KW"/>
</dbReference>
<dbReference type="GO" id="GO:0000105">
    <property type="term" value="P:L-histidine biosynthetic process"/>
    <property type="evidence" value="ECO:0007669"/>
    <property type="project" value="UniProtKB-UniRule"/>
</dbReference>
<dbReference type="CDD" id="cd04731">
    <property type="entry name" value="HisF"/>
    <property type="match status" value="1"/>
</dbReference>
<dbReference type="FunFam" id="3.20.20.70:FF:000006">
    <property type="entry name" value="Imidazole glycerol phosphate synthase subunit HisF"/>
    <property type="match status" value="1"/>
</dbReference>
<dbReference type="Gene3D" id="3.20.20.70">
    <property type="entry name" value="Aldolase class I"/>
    <property type="match status" value="1"/>
</dbReference>
<dbReference type="HAMAP" id="MF_01013">
    <property type="entry name" value="HisF"/>
    <property type="match status" value="1"/>
</dbReference>
<dbReference type="InterPro" id="IPR013785">
    <property type="entry name" value="Aldolase_TIM"/>
</dbReference>
<dbReference type="InterPro" id="IPR006062">
    <property type="entry name" value="His_biosynth"/>
</dbReference>
<dbReference type="InterPro" id="IPR004651">
    <property type="entry name" value="HisF"/>
</dbReference>
<dbReference type="InterPro" id="IPR050064">
    <property type="entry name" value="IGPS_HisA/HisF"/>
</dbReference>
<dbReference type="InterPro" id="IPR011060">
    <property type="entry name" value="RibuloseP-bd_barrel"/>
</dbReference>
<dbReference type="NCBIfam" id="TIGR00735">
    <property type="entry name" value="hisF"/>
    <property type="match status" value="1"/>
</dbReference>
<dbReference type="PANTHER" id="PTHR21235:SF2">
    <property type="entry name" value="IMIDAZOLE GLYCEROL PHOSPHATE SYNTHASE HISHF"/>
    <property type="match status" value="1"/>
</dbReference>
<dbReference type="PANTHER" id="PTHR21235">
    <property type="entry name" value="IMIDAZOLE GLYCEROL PHOSPHATE SYNTHASE SUBUNIT HISF/H IGP SYNTHASE SUBUNIT HISF/H"/>
    <property type="match status" value="1"/>
</dbReference>
<dbReference type="Pfam" id="PF00977">
    <property type="entry name" value="His_biosynth"/>
    <property type="match status" value="1"/>
</dbReference>
<dbReference type="SUPFAM" id="SSF51366">
    <property type="entry name" value="Ribulose-phoshate binding barrel"/>
    <property type="match status" value="1"/>
</dbReference>
<comment type="function">
    <text evidence="1">IGPS catalyzes the conversion of PRFAR and glutamine to IGP, AICAR and glutamate. The HisF subunit catalyzes the cyclization activity that produces IGP and AICAR from PRFAR using the ammonia provided by the HisH subunit.</text>
</comment>
<comment type="catalytic activity">
    <reaction evidence="1">
        <text>5-[(5-phospho-1-deoxy-D-ribulos-1-ylimino)methylamino]-1-(5-phospho-beta-D-ribosyl)imidazole-4-carboxamide + L-glutamine = D-erythro-1-(imidazol-4-yl)glycerol 3-phosphate + 5-amino-1-(5-phospho-beta-D-ribosyl)imidazole-4-carboxamide + L-glutamate + H(+)</text>
        <dbReference type="Rhea" id="RHEA:24793"/>
        <dbReference type="ChEBI" id="CHEBI:15378"/>
        <dbReference type="ChEBI" id="CHEBI:29985"/>
        <dbReference type="ChEBI" id="CHEBI:58278"/>
        <dbReference type="ChEBI" id="CHEBI:58359"/>
        <dbReference type="ChEBI" id="CHEBI:58475"/>
        <dbReference type="ChEBI" id="CHEBI:58525"/>
        <dbReference type="EC" id="4.3.2.10"/>
    </reaction>
</comment>
<comment type="pathway">
    <text evidence="1">Amino-acid biosynthesis; L-histidine biosynthesis; L-histidine from 5-phospho-alpha-D-ribose 1-diphosphate: step 5/9.</text>
</comment>
<comment type="subunit">
    <text evidence="1">Heterodimer of HisH and HisF.</text>
</comment>
<comment type="subcellular location">
    <subcellularLocation>
        <location evidence="1">Cytoplasm</location>
    </subcellularLocation>
</comment>
<comment type="similarity">
    <text evidence="1">Belongs to the HisA/HisF family.</text>
</comment>
<accession>P60714</accession>